<sequence length="710" mass="75372">MSDSPTSSPPAPSADSAPPPDTSSDGSAAPPPTDSAPPPSPPADSSPPPALPSLPPAVFSPPPTVSSPPPPPLDSSPPPPPDLTPPPSSPPPPDAPPPIPIVFPPPIDSPPPESTNSPPPPEVFEPPPPPADEDESPPAPPPPEQLPPPASSPQGGPKKPKKHHPGPATSPPAPSAPATSPPAPPNAPPRNSSHALPPKSTAAGGPLTSPSRGVPSSGNSVPPPANSGGGYQGKTMAGFAIAGFAVIALMAVVFLVRRKKKRNIDAYSDSQYLPPSNFSIKSDGFLYGQNPTKGYSGPGGYNSQQQSNSGNSFGSQRGGGGYTRSGSAPDSAVMGSGQTHFTYEELTDITEGFSKHNILGEGGFGCVYKGKLNDGKLVAVKQLKVGSGQGDREFKAEVEIISRVHHRHLVSLVGYCIADSERLLIYEYVPNQTLEHHLHGKGRPVLEWARRVRIAIGSAKGLAYLHEDCHPKIIHRDIKSANILLDDEFEAQVADFGLAKLNDSTQTHVSTRVMGTFGYLAPEYAQSGKLTDRSDVFSFGVVLLELITGRKPVDQYQPLGEESLVEWARPLLHKAIETGDFSELVDRRLEKHYVENEVFRMIETAAACVRHSGPKRPRMVQVVRALDSEGDMGDISNGNKVGQSSAYDSGQYNNDTMKFRKMAFGFDDSSDSGMYSGDYSVQDSRKGSNGASSEFTRNETENRNFNNRRY</sequence>
<gene>
    <name type="primary">PERK13</name>
    <name type="synonym">RHS10</name>
    <name type="ordered locus">At1g70460</name>
    <name type="ORF">F24J13.3</name>
</gene>
<name>PEK13_ARATH</name>
<keyword id="KW-0067">ATP-binding</keyword>
<keyword id="KW-1003">Cell membrane</keyword>
<keyword id="KW-0325">Glycoprotein</keyword>
<keyword id="KW-0418">Kinase</keyword>
<keyword id="KW-0472">Membrane</keyword>
<keyword id="KW-0547">Nucleotide-binding</keyword>
<keyword id="KW-0597">Phosphoprotein</keyword>
<keyword id="KW-1185">Reference proteome</keyword>
<keyword id="KW-0723">Serine/threonine-protein kinase</keyword>
<keyword id="KW-0808">Transferase</keyword>
<keyword id="KW-0812">Transmembrane</keyword>
<keyword id="KW-1133">Transmembrane helix</keyword>
<comment type="function">
    <text evidence="7 9">Negatively regulates root hair elongation.</text>
</comment>
<comment type="catalytic activity">
    <reaction>
        <text>L-seryl-[protein] + ATP = O-phospho-L-seryl-[protein] + ADP + H(+)</text>
        <dbReference type="Rhea" id="RHEA:17989"/>
        <dbReference type="Rhea" id="RHEA-COMP:9863"/>
        <dbReference type="Rhea" id="RHEA-COMP:11604"/>
        <dbReference type="ChEBI" id="CHEBI:15378"/>
        <dbReference type="ChEBI" id="CHEBI:29999"/>
        <dbReference type="ChEBI" id="CHEBI:30616"/>
        <dbReference type="ChEBI" id="CHEBI:83421"/>
        <dbReference type="ChEBI" id="CHEBI:456216"/>
        <dbReference type="EC" id="2.7.11.1"/>
    </reaction>
</comment>
<comment type="catalytic activity">
    <reaction>
        <text>L-threonyl-[protein] + ATP = O-phospho-L-threonyl-[protein] + ADP + H(+)</text>
        <dbReference type="Rhea" id="RHEA:46608"/>
        <dbReference type="Rhea" id="RHEA-COMP:11060"/>
        <dbReference type="Rhea" id="RHEA-COMP:11605"/>
        <dbReference type="ChEBI" id="CHEBI:15378"/>
        <dbReference type="ChEBI" id="CHEBI:30013"/>
        <dbReference type="ChEBI" id="CHEBI:30616"/>
        <dbReference type="ChEBI" id="CHEBI:61977"/>
        <dbReference type="ChEBI" id="CHEBI:456216"/>
        <dbReference type="EC" id="2.7.11.1"/>
    </reaction>
</comment>
<comment type="subunit">
    <text evidence="8">Interacts with KIPK1 and KIPK2 (via its cytosolic domain).</text>
</comment>
<comment type="subcellular location">
    <subcellularLocation>
        <location evidence="9">Cell membrane</location>
        <topology evidence="9">Single-pass membrane protein</topology>
    </subcellularLocation>
</comment>
<comment type="tissue specificity">
    <text evidence="6 7">Mostly expressed in roots, especially in root hairs.</text>
</comment>
<comment type="disruption phenotype">
    <text evidence="7 9">Longer root hairs.</text>
</comment>
<comment type="similarity">
    <text evidence="3">Belongs to the protein kinase superfamily. Ser/Thr protein kinase family.</text>
</comment>
<comment type="sequence caution" evidence="10">
    <conflict type="frameshift">
        <sequence resource="EMBL" id="BX816903"/>
    </conflict>
</comment>
<protein>
    <recommendedName>
        <fullName>Proline-rich receptor-like protein kinase PERK13</fullName>
        <ecNumber>2.7.11.1</ecNumber>
    </recommendedName>
    <alternativeName>
        <fullName>Proline-rich extensin-like receptor kinase 13</fullName>
        <shortName>AtPERK13</shortName>
    </alternativeName>
    <alternativeName>
        <fullName>Protein ROOT HAIR SPECIFIC 10</fullName>
    </alternativeName>
</protein>
<organism>
    <name type="scientific">Arabidopsis thaliana</name>
    <name type="common">Mouse-ear cress</name>
    <dbReference type="NCBI Taxonomy" id="3702"/>
    <lineage>
        <taxon>Eukaryota</taxon>
        <taxon>Viridiplantae</taxon>
        <taxon>Streptophyta</taxon>
        <taxon>Embryophyta</taxon>
        <taxon>Tracheophyta</taxon>
        <taxon>Spermatophyta</taxon>
        <taxon>Magnoliopsida</taxon>
        <taxon>eudicotyledons</taxon>
        <taxon>Gunneridae</taxon>
        <taxon>Pentapetalae</taxon>
        <taxon>rosids</taxon>
        <taxon>malvids</taxon>
        <taxon>Brassicales</taxon>
        <taxon>Brassicaceae</taxon>
        <taxon>Camelineae</taxon>
        <taxon>Arabidopsis</taxon>
    </lineage>
</organism>
<dbReference type="EC" id="2.7.11.1"/>
<dbReference type="EMBL" id="AC010796">
    <property type="protein sequence ID" value="AAG52479.1"/>
    <property type="molecule type" value="Genomic_DNA"/>
</dbReference>
<dbReference type="EMBL" id="CP002684">
    <property type="protein sequence ID" value="AEE35064.1"/>
    <property type="molecule type" value="Genomic_DNA"/>
</dbReference>
<dbReference type="EMBL" id="BX816903">
    <property type="status" value="NOT_ANNOTATED_CDS"/>
    <property type="molecule type" value="mRNA"/>
</dbReference>
<dbReference type="PIR" id="D96728">
    <property type="entry name" value="D96728"/>
</dbReference>
<dbReference type="RefSeq" id="NP_177203.1">
    <property type="nucleotide sequence ID" value="NM_105714.4"/>
</dbReference>
<dbReference type="SMR" id="Q9CAL8"/>
<dbReference type="BioGRID" id="28602">
    <property type="interactions" value="1"/>
</dbReference>
<dbReference type="FunCoup" id="Q9CAL8">
    <property type="interactions" value="6"/>
</dbReference>
<dbReference type="IntAct" id="Q9CAL8">
    <property type="interactions" value="2"/>
</dbReference>
<dbReference type="STRING" id="3702.Q9CAL8"/>
<dbReference type="GlyCosmos" id="Q9CAL8">
    <property type="glycosylation" value="1 site, No reported glycans"/>
</dbReference>
<dbReference type="GlyGen" id="Q9CAL8">
    <property type="glycosylation" value="3 sites"/>
</dbReference>
<dbReference type="PaxDb" id="3702-AT1G70460.1"/>
<dbReference type="ProteomicsDB" id="235090"/>
<dbReference type="EnsemblPlants" id="AT1G70460.1">
    <property type="protein sequence ID" value="AT1G70460.1"/>
    <property type="gene ID" value="AT1G70460"/>
</dbReference>
<dbReference type="GeneID" id="843382"/>
<dbReference type="Gramene" id="AT1G70460.1">
    <property type="protein sequence ID" value="AT1G70460.1"/>
    <property type="gene ID" value="AT1G70460"/>
</dbReference>
<dbReference type="KEGG" id="ath:AT1G70460"/>
<dbReference type="Araport" id="AT1G70460"/>
<dbReference type="TAIR" id="AT1G70460">
    <property type="gene designation" value="PERK13"/>
</dbReference>
<dbReference type="eggNOG" id="KOG1187">
    <property type="taxonomic scope" value="Eukaryota"/>
</dbReference>
<dbReference type="HOGENOM" id="CLU_000288_106_3_1"/>
<dbReference type="InParanoid" id="Q9CAL8"/>
<dbReference type="OMA" id="ISNFRRM"/>
<dbReference type="OrthoDB" id="4062651at2759"/>
<dbReference type="PhylomeDB" id="Q9CAL8"/>
<dbReference type="PRO" id="PR:Q9CAL8"/>
<dbReference type="Proteomes" id="UP000006548">
    <property type="component" value="Chromosome 1"/>
</dbReference>
<dbReference type="ExpressionAtlas" id="Q9CAL8">
    <property type="expression patterns" value="baseline and differential"/>
</dbReference>
<dbReference type="GO" id="GO:0005886">
    <property type="term" value="C:plasma membrane"/>
    <property type="evidence" value="ECO:0007669"/>
    <property type="project" value="UniProtKB-SubCell"/>
</dbReference>
<dbReference type="GO" id="GO:0005524">
    <property type="term" value="F:ATP binding"/>
    <property type="evidence" value="ECO:0007669"/>
    <property type="project" value="UniProtKB-KW"/>
</dbReference>
<dbReference type="GO" id="GO:0019901">
    <property type="term" value="F:protein kinase binding"/>
    <property type="evidence" value="ECO:0000353"/>
    <property type="project" value="UniProtKB"/>
</dbReference>
<dbReference type="GO" id="GO:0106310">
    <property type="term" value="F:protein serine kinase activity"/>
    <property type="evidence" value="ECO:0007669"/>
    <property type="project" value="RHEA"/>
</dbReference>
<dbReference type="GO" id="GO:0004674">
    <property type="term" value="F:protein serine/threonine kinase activity"/>
    <property type="evidence" value="ECO:0007669"/>
    <property type="project" value="UniProtKB-KW"/>
</dbReference>
<dbReference type="CDD" id="cd14066">
    <property type="entry name" value="STKc_IRAK"/>
    <property type="match status" value="1"/>
</dbReference>
<dbReference type="FunFam" id="3.30.200.20:FF:000212">
    <property type="entry name" value="Proline-rich receptor-like protein kinase PERK8"/>
    <property type="match status" value="1"/>
</dbReference>
<dbReference type="FunFam" id="1.10.510.10:FF:000173">
    <property type="entry name" value="proline-rich receptor-like protein kinase PERK8"/>
    <property type="match status" value="1"/>
</dbReference>
<dbReference type="Gene3D" id="3.30.200.20">
    <property type="entry name" value="Phosphorylase Kinase, domain 1"/>
    <property type="match status" value="1"/>
</dbReference>
<dbReference type="Gene3D" id="1.10.510.10">
    <property type="entry name" value="Transferase(Phosphotransferase) domain 1"/>
    <property type="match status" value="1"/>
</dbReference>
<dbReference type="InterPro" id="IPR011009">
    <property type="entry name" value="Kinase-like_dom_sf"/>
</dbReference>
<dbReference type="InterPro" id="IPR047117">
    <property type="entry name" value="PERK1-13-like"/>
</dbReference>
<dbReference type="InterPro" id="IPR000719">
    <property type="entry name" value="Prot_kinase_dom"/>
</dbReference>
<dbReference type="InterPro" id="IPR017441">
    <property type="entry name" value="Protein_kinase_ATP_BS"/>
</dbReference>
<dbReference type="InterPro" id="IPR001245">
    <property type="entry name" value="Ser-Thr/Tyr_kinase_cat_dom"/>
</dbReference>
<dbReference type="InterPro" id="IPR008271">
    <property type="entry name" value="Ser/Thr_kinase_AS"/>
</dbReference>
<dbReference type="PANTHER" id="PTHR47982:SF44">
    <property type="entry name" value="PROLINE-RICH RECEPTOR-LIKE PROTEIN KINASE PERK13-RELATED"/>
    <property type="match status" value="1"/>
</dbReference>
<dbReference type="PANTHER" id="PTHR47982">
    <property type="entry name" value="PROLINE-RICH RECEPTOR-LIKE PROTEIN KINASE PERK4"/>
    <property type="match status" value="1"/>
</dbReference>
<dbReference type="Pfam" id="PF07714">
    <property type="entry name" value="PK_Tyr_Ser-Thr"/>
    <property type="match status" value="1"/>
</dbReference>
<dbReference type="SMART" id="SM00220">
    <property type="entry name" value="S_TKc"/>
    <property type="match status" value="1"/>
</dbReference>
<dbReference type="SUPFAM" id="SSF56112">
    <property type="entry name" value="Protein kinase-like (PK-like)"/>
    <property type="match status" value="1"/>
</dbReference>
<dbReference type="PROSITE" id="PS00107">
    <property type="entry name" value="PROTEIN_KINASE_ATP"/>
    <property type="match status" value="1"/>
</dbReference>
<dbReference type="PROSITE" id="PS50011">
    <property type="entry name" value="PROTEIN_KINASE_DOM"/>
    <property type="match status" value="1"/>
</dbReference>
<dbReference type="PROSITE" id="PS00108">
    <property type="entry name" value="PROTEIN_KINASE_ST"/>
    <property type="match status" value="1"/>
</dbReference>
<reference key="1">
    <citation type="journal article" date="2000" name="Nature">
        <title>Sequence and analysis of chromosome 1 of the plant Arabidopsis thaliana.</title>
        <authorList>
            <person name="Theologis A."/>
            <person name="Ecker J.R."/>
            <person name="Palm C.J."/>
            <person name="Federspiel N.A."/>
            <person name="Kaul S."/>
            <person name="White O."/>
            <person name="Alonso J."/>
            <person name="Altafi H."/>
            <person name="Araujo R."/>
            <person name="Bowman C.L."/>
            <person name="Brooks S.Y."/>
            <person name="Buehler E."/>
            <person name="Chan A."/>
            <person name="Chao Q."/>
            <person name="Chen H."/>
            <person name="Cheuk R.F."/>
            <person name="Chin C.W."/>
            <person name="Chung M.K."/>
            <person name="Conn L."/>
            <person name="Conway A.B."/>
            <person name="Conway A.R."/>
            <person name="Creasy T.H."/>
            <person name="Dewar K."/>
            <person name="Dunn P."/>
            <person name="Etgu P."/>
            <person name="Feldblyum T.V."/>
            <person name="Feng J.-D."/>
            <person name="Fong B."/>
            <person name="Fujii C.Y."/>
            <person name="Gill J.E."/>
            <person name="Goldsmith A.D."/>
            <person name="Haas B."/>
            <person name="Hansen N.F."/>
            <person name="Hughes B."/>
            <person name="Huizar L."/>
            <person name="Hunter J.L."/>
            <person name="Jenkins J."/>
            <person name="Johnson-Hopson C."/>
            <person name="Khan S."/>
            <person name="Khaykin E."/>
            <person name="Kim C.J."/>
            <person name="Koo H.L."/>
            <person name="Kremenetskaia I."/>
            <person name="Kurtz D.B."/>
            <person name="Kwan A."/>
            <person name="Lam B."/>
            <person name="Langin-Hooper S."/>
            <person name="Lee A."/>
            <person name="Lee J.M."/>
            <person name="Lenz C.A."/>
            <person name="Li J.H."/>
            <person name="Li Y.-P."/>
            <person name="Lin X."/>
            <person name="Liu S.X."/>
            <person name="Liu Z.A."/>
            <person name="Luros J.S."/>
            <person name="Maiti R."/>
            <person name="Marziali A."/>
            <person name="Militscher J."/>
            <person name="Miranda M."/>
            <person name="Nguyen M."/>
            <person name="Nierman W.C."/>
            <person name="Osborne B.I."/>
            <person name="Pai G."/>
            <person name="Peterson J."/>
            <person name="Pham P.K."/>
            <person name="Rizzo M."/>
            <person name="Rooney T."/>
            <person name="Rowley D."/>
            <person name="Sakano H."/>
            <person name="Salzberg S.L."/>
            <person name="Schwartz J.R."/>
            <person name="Shinn P."/>
            <person name="Southwick A.M."/>
            <person name="Sun H."/>
            <person name="Tallon L.J."/>
            <person name="Tambunga G."/>
            <person name="Toriumi M.J."/>
            <person name="Town C.D."/>
            <person name="Utterback T."/>
            <person name="Van Aken S."/>
            <person name="Vaysberg M."/>
            <person name="Vysotskaia V.S."/>
            <person name="Walker M."/>
            <person name="Wu D."/>
            <person name="Yu G."/>
            <person name="Fraser C.M."/>
            <person name="Venter J.C."/>
            <person name="Davis R.W."/>
        </authorList>
    </citation>
    <scope>NUCLEOTIDE SEQUENCE [LARGE SCALE GENOMIC DNA]</scope>
    <source>
        <strain>cv. Columbia</strain>
    </source>
</reference>
<reference key="2">
    <citation type="journal article" date="2017" name="Plant J.">
        <title>Araport11: a complete reannotation of the Arabidopsis thaliana reference genome.</title>
        <authorList>
            <person name="Cheng C.Y."/>
            <person name="Krishnakumar V."/>
            <person name="Chan A.P."/>
            <person name="Thibaud-Nissen F."/>
            <person name="Schobel S."/>
            <person name="Town C.D."/>
        </authorList>
    </citation>
    <scope>GENOME REANNOTATION</scope>
    <source>
        <strain>cv. Columbia</strain>
    </source>
</reference>
<reference key="3">
    <citation type="journal article" date="2004" name="Genome Res.">
        <title>Whole genome sequence comparisons and 'full-length' cDNA sequences: a combined approach to evaluate and improve Arabidopsis genome annotation.</title>
        <authorList>
            <person name="Castelli V."/>
            <person name="Aury J.-M."/>
            <person name="Jaillon O."/>
            <person name="Wincker P."/>
            <person name="Clepet C."/>
            <person name="Menard M."/>
            <person name="Cruaud C."/>
            <person name="Quetier F."/>
            <person name="Scarpelli C."/>
            <person name="Schaechter V."/>
            <person name="Temple G."/>
            <person name="Caboche M."/>
            <person name="Weissenbach J."/>
            <person name="Salanoubat M."/>
        </authorList>
    </citation>
    <scope>NUCLEOTIDE SEQUENCE [LARGE SCALE MRNA]</scope>
    <source>
        <strain>cv. Columbia</strain>
    </source>
</reference>
<reference key="4">
    <citation type="journal article" date="2002" name="Plant Mol. Biol.">
        <title>The proline-rich, extensin-like receptor kinase-1 (PERK1) gene is rapidly induced by wounding.</title>
        <authorList>
            <person name="Silva N.F."/>
            <person name="Goring D.R."/>
        </authorList>
    </citation>
    <scope>GENE FAMILY</scope>
</reference>
<reference key="5">
    <citation type="journal article" date="2004" name="Plant Cell Physiol.">
        <title>A comprehensive expression analysis of the Arabidopsis proline-rich extensin-like receptor kinase gene family using bioinformatic and experimental approaches.</title>
        <authorList>
            <person name="Nakhamchik A."/>
            <person name="Zhao Z."/>
            <person name="Provart N.J."/>
            <person name="Shiu S.-H."/>
            <person name="Keatley S.K."/>
            <person name="Cameron R.K."/>
            <person name="Goring D.R."/>
        </authorList>
    </citation>
    <scope>TISSUE SPECIFICITY</scope>
    <scope>GENE FAMILY</scope>
    <scope>NOMENCLATURE</scope>
</reference>
<reference key="6">
    <citation type="journal article" date="2009" name="Plant Physiol.">
        <title>Cis-element- and transcriptome-based screening of root hair-specific genes and their functional characterization in Arabidopsis.</title>
        <authorList>
            <person name="Won S.-K."/>
            <person name="Lee Y.-J."/>
            <person name="Lee H.-Y."/>
            <person name="Heo Y.-K."/>
            <person name="Cho M."/>
            <person name="Cho H.-T."/>
        </authorList>
    </citation>
    <scope>FUNCTION</scope>
    <scope>TISSUE SPECIFICITY</scope>
    <scope>DISRUPTION PHENOTYPE</scope>
</reference>
<reference key="7">
    <citation type="book" date="2010" name="Proceedings of the 21st international conference on Arabidopsis research">
        <title>A pro-rich extensin-like receptor kinase regulates Arabidopsis root hair growth.</title>
        <authorList>
            <person name="Lin C."/>
            <person name="Cho H.-T."/>
        </authorList>
    </citation>
    <scope>FUNCTION</scope>
    <scope>DISRUPTION PHENOTYPE</scope>
    <scope>SUBCELLULAR LOCATION</scope>
</reference>
<reference key="8">
    <citation type="journal article" date="2015" name="J. Exp. Bot.">
        <title>PERK-KIPK-KCBP signalling negatively regulates root growth in Arabidopsis thaliana.</title>
        <authorList>
            <person name="Humphrey T.V."/>
            <person name="Haasen K.E."/>
            <person name="Aldea-Brydges M.G."/>
            <person name="Sun H."/>
            <person name="Zayed Y."/>
            <person name="Indriolo E."/>
            <person name="Goring D.R."/>
        </authorList>
    </citation>
    <scope>INTERACTION WITH KIPK1 AND KIPK2</scope>
</reference>
<accession>Q9CAL8</accession>
<proteinExistence type="evidence at protein level"/>
<feature type="chain" id="PRO_0000400065" description="Proline-rich receptor-like protein kinase PERK13">
    <location>
        <begin position="1"/>
        <end position="710"/>
    </location>
</feature>
<feature type="topological domain" description="Extracellular" evidence="2">
    <location>
        <begin position="1"/>
        <end position="235"/>
    </location>
</feature>
<feature type="transmembrane region" description="Helical" evidence="2">
    <location>
        <begin position="236"/>
        <end position="256"/>
    </location>
</feature>
<feature type="topological domain" description="Cytoplasmic" evidence="2">
    <location>
        <begin position="257"/>
        <end position="710"/>
    </location>
</feature>
<feature type="domain" description="Protein kinase" evidence="3">
    <location>
        <begin position="353"/>
        <end position="619"/>
    </location>
</feature>
<feature type="region of interest" description="Disordered" evidence="5">
    <location>
        <begin position="1"/>
        <end position="229"/>
    </location>
</feature>
<feature type="region of interest" description="Disordered" evidence="5">
    <location>
        <begin position="289"/>
        <end position="334"/>
    </location>
</feature>
<feature type="region of interest" description="Disordered" evidence="5">
    <location>
        <begin position="676"/>
        <end position="710"/>
    </location>
</feature>
<feature type="compositionally biased region" description="Pro residues" evidence="5">
    <location>
        <begin position="7"/>
        <end position="21"/>
    </location>
</feature>
<feature type="compositionally biased region" description="Pro residues" evidence="5">
    <location>
        <begin position="29"/>
        <end position="130"/>
    </location>
</feature>
<feature type="compositionally biased region" description="Pro residues" evidence="5">
    <location>
        <begin position="137"/>
        <end position="151"/>
    </location>
</feature>
<feature type="compositionally biased region" description="Pro residues" evidence="5">
    <location>
        <begin position="168"/>
        <end position="188"/>
    </location>
</feature>
<feature type="compositionally biased region" description="Low complexity" evidence="5">
    <location>
        <begin position="209"/>
        <end position="220"/>
    </location>
</feature>
<feature type="compositionally biased region" description="Low complexity" evidence="5">
    <location>
        <begin position="301"/>
        <end position="315"/>
    </location>
</feature>
<feature type="active site" description="Proton acceptor" evidence="3 4">
    <location>
        <position position="477"/>
    </location>
</feature>
<feature type="binding site" evidence="3">
    <location>
        <begin position="359"/>
        <end position="367"/>
    </location>
    <ligand>
        <name>ATP</name>
        <dbReference type="ChEBI" id="CHEBI:30616"/>
    </ligand>
</feature>
<feature type="binding site" evidence="3">
    <location>
        <position position="381"/>
    </location>
    <ligand>
        <name>ATP</name>
        <dbReference type="ChEBI" id="CHEBI:30616"/>
    </ligand>
</feature>
<feature type="modified residue" description="Phosphothreonine" evidence="1">
    <location>
        <position position="342"/>
    </location>
</feature>
<feature type="modified residue" description="Phosphotyrosine" evidence="1">
    <location>
        <position position="426"/>
    </location>
</feature>
<feature type="modified residue" description="Phosphoserine" evidence="1">
    <location>
        <position position="510"/>
    </location>
</feature>
<feature type="modified residue" description="Phosphothreonine" evidence="1">
    <location>
        <position position="511"/>
    </location>
</feature>
<feature type="modified residue" description="Phosphothreonine" evidence="1">
    <location>
        <position position="516"/>
    </location>
</feature>
<feature type="modified residue" description="Phosphotyrosine" evidence="1">
    <location>
        <position position="524"/>
    </location>
</feature>
<feature type="glycosylation site" description="N-linked (GlcNAc...) asparagine" evidence="2">
    <location>
        <position position="191"/>
    </location>
</feature>
<feature type="sequence conflict" description="In Ref. 3; BX816903." evidence="10" ref="3">
    <original>S</original>
    <variation>A</variation>
    <location>
        <position position="67"/>
    </location>
</feature>
<feature type="sequence conflict" description="In Ref. 3; BX816903." evidence="10" ref="3">
    <original>LT</original>
    <variation>FC</variation>
    <location>
        <begin position="83"/>
        <end position="84"/>
    </location>
</feature>
<feature type="sequence conflict" description="In Ref. 3; BX816903." evidence="10" ref="3">
    <original>P</original>
    <variation>L</variation>
    <location>
        <position position="174"/>
    </location>
</feature>
<evidence type="ECO:0000250" key="1">
    <source>
        <dbReference type="UniProtKB" id="O48814"/>
    </source>
</evidence>
<evidence type="ECO:0000255" key="2"/>
<evidence type="ECO:0000255" key="3">
    <source>
        <dbReference type="PROSITE-ProRule" id="PRU00159"/>
    </source>
</evidence>
<evidence type="ECO:0000255" key="4">
    <source>
        <dbReference type="PROSITE-ProRule" id="PRU10027"/>
    </source>
</evidence>
<evidence type="ECO:0000256" key="5">
    <source>
        <dbReference type="SAM" id="MobiDB-lite"/>
    </source>
</evidence>
<evidence type="ECO:0000269" key="6">
    <source>
    </source>
</evidence>
<evidence type="ECO:0000269" key="7">
    <source>
    </source>
</evidence>
<evidence type="ECO:0000269" key="8">
    <source>
    </source>
</evidence>
<evidence type="ECO:0000269" key="9">
    <source ref="7"/>
</evidence>
<evidence type="ECO:0000305" key="10"/>